<organism>
    <name type="scientific">Escherichia coli (strain ATCC 8739 / DSM 1576 / NBRC 3972 / NCIMB 8545 / WDCM 00012 / Crooks)</name>
    <dbReference type="NCBI Taxonomy" id="481805"/>
    <lineage>
        <taxon>Bacteria</taxon>
        <taxon>Pseudomonadati</taxon>
        <taxon>Pseudomonadota</taxon>
        <taxon>Gammaproteobacteria</taxon>
        <taxon>Enterobacterales</taxon>
        <taxon>Enterobacteriaceae</taxon>
        <taxon>Escherichia</taxon>
    </lineage>
</organism>
<protein>
    <recommendedName>
        <fullName evidence="1">Sialic acid transporter NanT</fullName>
    </recommendedName>
    <alternativeName>
        <fullName evidence="1">Sialic acid permease</fullName>
    </alternativeName>
    <alternativeName>
        <fullName evidence="1">Sialic acid/H(+) symporter</fullName>
    </alternativeName>
</protein>
<sequence>MSTTTQNIPWYRHLNRAQWRAFSAAWLGYLLDGFDFVLIALVLTEVQGEFGLTTVQAASLISAAFISRWFGGLMLGAMGDRYGRRLAMVTSIVLFSAGTLACGFAPGYITMFIARLVIGMGMAGEYGSSATYVIESWPKHLRNKASGFLISGFSVGAVVAAQVYSLVVPVWGWRALFFIGILPIIFALWLRKNIPEAEDWKEKHAGKAPVRTMVDILYRGEHRIANIVMTLAAATALWFCFAGNLQNAAIVAVLGLLCAAIFISFMVQSTGKRWPTGVMLMVVVLFAFLYSWPIQALLPTYLKTDLAYNPHTVANVLFFSGFGAAVGCCVGGFLGDWLGTRKAYVCSLLASQLLIIPVFAIGGANVWVLGLLLFFQQMLGQGIAGILPKLIGGYFDTDQRAAGLGFTYNVGALGGALAPIIGALIAQRLDLGTALASLSFSLTFVVILLIGLDMPSRVQRWLRPEALRTHDAIDGKPFSGAVPFGSAKNDLVKTKS</sequence>
<dbReference type="EMBL" id="CP000946">
    <property type="protein sequence ID" value="ACA76159.1"/>
    <property type="molecule type" value="Genomic_DNA"/>
</dbReference>
<dbReference type="RefSeq" id="WP_000108459.1">
    <property type="nucleotide sequence ID" value="NZ_MTFT01000027.1"/>
</dbReference>
<dbReference type="SMR" id="B1IQQ5"/>
<dbReference type="GeneID" id="75206074"/>
<dbReference type="KEGG" id="ecl:EcolC_0482"/>
<dbReference type="HOGENOM" id="CLU_001265_46_8_6"/>
<dbReference type="GO" id="GO:0005886">
    <property type="term" value="C:plasma membrane"/>
    <property type="evidence" value="ECO:0007669"/>
    <property type="project" value="UniProtKB-SubCell"/>
</dbReference>
<dbReference type="GO" id="GO:0046943">
    <property type="term" value="F:carboxylic acid transmembrane transporter activity"/>
    <property type="evidence" value="ECO:0007669"/>
    <property type="project" value="TreeGrafter"/>
</dbReference>
<dbReference type="GO" id="GO:0015538">
    <property type="term" value="F:sialic acid:proton symporter activity"/>
    <property type="evidence" value="ECO:0007669"/>
    <property type="project" value="UniProtKB-UniRule"/>
</dbReference>
<dbReference type="CDD" id="cd17316">
    <property type="entry name" value="MFS_SV2_like"/>
    <property type="match status" value="1"/>
</dbReference>
<dbReference type="FunFam" id="1.20.1250.20:FF:000027">
    <property type="entry name" value="Sialic acid transporter NanT"/>
    <property type="match status" value="1"/>
</dbReference>
<dbReference type="FunFam" id="1.20.1250.20:FF:000038">
    <property type="entry name" value="Sialic acid transporter NanT"/>
    <property type="match status" value="1"/>
</dbReference>
<dbReference type="Gene3D" id="1.20.1250.20">
    <property type="entry name" value="MFS general substrate transporter like domains"/>
    <property type="match status" value="2"/>
</dbReference>
<dbReference type="HAMAP" id="MF_01238">
    <property type="entry name" value="MFS_NanT"/>
    <property type="match status" value="1"/>
</dbReference>
<dbReference type="InterPro" id="IPR011701">
    <property type="entry name" value="MFS"/>
</dbReference>
<dbReference type="InterPro" id="IPR020846">
    <property type="entry name" value="MFS_dom"/>
</dbReference>
<dbReference type="InterPro" id="IPR036259">
    <property type="entry name" value="MFS_trans_sf"/>
</dbReference>
<dbReference type="InterPro" id="IPR004742">
    <property type="entry name" value="SA_transporter"/>
</dbReference>
<dbReference type="NCBIfam" id="TIGR00891">
    <property type="entry name" value="2A0112"/>
    <property type="match status" value="1"/>
</dbReference>
<dbReference type="NCBIfam" id="NF003024">
    <property type="entry name" value="PRK03893.1"/>
    <property type="match status" value="1"/>
</dbReference>
<dbReference type="PANTHER" id="PTHR23508">
    <property type="entry name" value="CARBOXYLIC ACID TRANSPORTER PROTEIN HOMOLOG"/>
    <property type="match status" value="1"/>
</dbReference>
<dbReference type="PANTHER" id="PTHR23508:SF3">
    <property type="entry name" value="SIALIC ACID TRANSPORTER NANT"/>
    <property type="match status" value="1"/>
</dbReference>
<dbReference type="Pfam" id="PF07690">
    <property type="entry name" value="MFS_1"/>
    <property type="match status" value="1"/>
</dbReference>
<dbReference type="SUPFAM" id="SSF103473">
    <property type="entry name" value="MFS general substrate transporter"/>
    <property type="match status" value="1"/>
</dbReference>
<dbReference type="PROSITE" id="PS50850">
    <property type="entry name" value="MFS"/>
    <property type="match status" value="1"/>
</dbReference>
<comment type="function">
    <text evidence="1">Catalyzes the proton-dependent transport of sialic acid.</text>
</comment>
<comment type="catalytic activity">
    <reaction evidence="1">
        <text>N-acetylneuraminate(in) + H(+)(in) = N-acetylneuraminate(out) + H(+)(out)</text>
        <dbReference type="Rhea" id="RHEA:28987"/>
        <dbReference type="ChEBI" id="CHEBI:15378"/>
        <dbReference type="ChEBI" id="CHEBI:35418"/>
    </reaction>
</comment>
<comment type="subcellular location">
    <subcellularLocation>
        <location evidence="1">Cell inner membrane</location>
        <topology evidence="1">Multi-pass membrane protein</topology>
    </subcellularLocation>
</comment>
<comment type="similarity">
    <text evidence="1">Belongs to the major facilitator superfamily. Sialate:H(+) symporter (SHS) (TC 2.A.1.12) family.</text>
</comment>
<proteinExistence type="inferred from homology"/>
<gene>
    <name evidence="1" type="primary">nanT</name>
    <name type="ordered locus">EcolC_0482</name>
</gene>
<feature type="chain" id="PRO_1000214050" description="Sialic acid transporter NanT">
    <location>
        <begin position="1"/>
        <end position="496"/>
    </location>
</feature>
<feature type="transmembrane region" description="Helical" evidence="1">
    <location>
        <begin position="22"/>
        <end position="42"/>
    </location>
</feature>
<feature type="transmembrane region" description="Helical" evidence="1">
    <location>
        <begin position="58"/>
        <end position="78"/>
    </location>
</feature>
<feature type="transmembrane region" description="Helical" evidence="1">
    <location>
        <begin position="92"/>
        <end position="112"/>
    </location>
</feature>
<feature type="transmembrane region" description="Helical" evidence="1">
    <location>
        <begin position="116"/>
        <end position="136"/>
    </location>
</feature>
<feature type="transmembrane region" description="Helical" evidence="1">
    <location>
        <begin position="148"/>
        <end position="168"/>
    </location>
</feature>
<feature type="transmembrane region" description="Helical" evidence="1">
    <location>
        <begin position="170"/>
        <end position="190"/>
    </location>
</feature>
<feature type="transmembrane region" description="Helical" evidence="1">
    <location>
        <begin position="224"/>
        <end position="244"/>
    </location>
</feature>
<feature type="transmembrane region" description="Helical" evidence="1">
    <location>
        <begin position="247"/>
        <end position="267"/>
    </location>
</feature>
<feature type="transmembrane region" description="Helical" evidence="1">
    <location>
        <begin position="278"/>
        <end position="298"/>
    </location>
</feature>
<feature type="transmembrane region" description="Helical" evidence="1">
    <location>
        <begin position="313"/>
        <end position="333"/>
    </location>
</feature>
<feature type="transmembrane region" description="Helical" evidence="1">
    <location>
        <begin position="353"/>
        <end position="375"/>
    </location>
</feature>
<feature type="transmembrane region" description="Helical" evidence="1">
    <location>
        <begin position="406"/>
        <end position="426"/>
    </location>
</feature>
<feature type="transmembrane region" description="Helical" evidence="1">
    <location>
        <begin position="431"/>
        <end position="451"/>
    </location>
</feature>
<name>NANT_ECOLC</name>
<reference key="1">
    <citation type="submission" date="2008-02" db="EMBL/GenBank/DDBJ databases">
        <title>Complete sequence of Escherichia coli C str. ATCC 8739.</title>
        <authorList>
            <person name="Copeland A."/>
            <person name="Lucas S."/>
            <person name="Lapidus A."/>
            <person name="Glavina del Rio T."/>
            <person name="Dalin E."/>
            <person name="Tice H."/>
            <person name="Bruce D."/>
            <person name="Goodwin L."/>
            <person name="Pitluck S."/>
            <person name="Kiss H."/>
            <person name="Brettin T."/>
            <person name="Detter J.C."/>
            <person name="Han C."/>
            <person name="Kuske C.R."/>
            <person name="Schmutz J."/>
            <person name="Larimer F."/>
            <person name="Land M."/>
            <person name="Hauser L."/>
            <person name="Kyrpides N."/>
            <person name="Mikhailova N."/>
            <person name="Ingram L."/>
            <person name="Richardson P."/>
        </authorList>
    </citation>
    <scope>NUCLEOTIDE SEQUENCE [LARGE SCALE GENOMIC DNA]</scope>
    <source>
        <strain>ATCC 8739 / DSM 1576 / NBRC 3972 / NCIMB 8545 / WDCM 00012 / Crooks</strain>
    </source>
</reference>
<evidence type="ECO:0000255" key="1">
    <source>
        <dbReference type="HAMAP-Rule" id="MF_01238"/>
    </source>
</evidence>
<keyword id="KW-0997">Cell inner membrane</keyword>
<keyword id="KW-1003">Cell membrane</keyword>
<keyword id="KW-0472">Membrane</keyword>
<keyword id="KW-0762">Sugar transport</keyword>
<keyword id="KW-0812">Transmembrane</keyword>
<keyword id="KW-1133">Transmembrane helix</keyword>
<keyword id="KW-0813">Transport</keyword>
<accession>B1IQQ5</accession>